<organism>
    <name type="scientific">Buchnera aphidicola subsp. Schizaphis graminum (strain Sg)</name>
    <dbReference type="NCBI Taxonomy" id="198804"/>
    <lineage>
        <taxon>Bacteria</taxon>
        <taxon>Pseudomonadati</taxon>
        <taxon>Pseudomonadota</taxon>
        <taxon>Gammaproteobacteria</taxon>
        <taxon>Enterobacterales</taxon>
        <taxon>Erwiniaceae</taxon>
        <taxon>Buchnera</taxon>
    </lineage>
</organism>
<reference key="1">
    <citation type="journal article" date="2002" name="Science">
        <title>50 million years of genomic stasis in endosymbiotic bacteria.</title>
        <authorList>
            <person name="Tamas I."/>
            <person name="Klasson L."/>
            <person name="Canbaeck B."/>
            <person name="Naeslund A.K."/>
            <person name="Eriksson A.-S."/>
            <person name="Wernegreen J.J."/>
            <person name="Sandstroem J.P."/>
            <person name="Moran N.A."/>
            <person name="Andersson S.G.E."/>
        </authorList>
    </citation>
    <scope>NUCLEOTIDE SEQUENCE [LARGE SCALE GENOMIC DNA]</scope>
    <source>
        <strain>Sg</strain>
    </source>
</reference>
<gene>
    <name evidence="1" type="primary">dut</name>
    <name type="ordered locus">BUsg_540</name>
</gene>
<feature type="chain" id="PRO_0000182838" description="Deoxyuridine 5'-triphosphate nucleotidohydrolase">
    <location>
        <begin position="1"/>
        <end position="159"/>
    </location>
</feature>
<feature type="binding site" evidence="1">
    <location>
        <begin position="78"/>
        <end position="80"/>
    </location>
    <ligand>
        <name>substrate</name>
    </ligand>
</feature>
<feature type="binding site" evidence="1">
    <location>
        <position position="91"/>
    </location>
    <ligand>
        <name>substrate</name>
    </ligand>
</feature>
<feature type="binding site" evidence="1">
    <location>
        <begin position="95"/>
        <end position="97"/>
    </location>
    <ligand>
        <name>substrate</name>
    </ligand>
</feature>
<feature type="binding site" evidence="1">
    <location>
        <position position="105"/>
    </location>
    <ligand>
        <name>substrate</name>
    </ligand>
</feature>
<dbReference type="EC" id="3.6.1.23" evidence="1"/>
<dbReference type="EMBL" id="AE013218">
    <property type="protein sequence ID" value="AAM68080.1"/>
    <property type="molecule type" value="Genomic_DNA"/>
</dbReference>
<dbReference type="RefSeq" id="WP_011054046.1">
    <property type="nucleotide sequence ID" value="NC_004061.1"/>
</dbReference>
<dbReference type="SMR" id="Q8K921"/>
<dbReference type="STRING" id="198804.BUsg_540"/>
<dbReference type="GeneID" id="93004017"/>
<dbReference type="KEGG" id="bas:BUsg_540"/>
<dbReference type="eggNOG" id="COG0756">
    <property type="taxonomic scope" value="Bacteria"/>
</dbReference>
<dbReference type="HOGENOM" id="CLU_068508_1_1_6"/>
<dbReference type="UniPathway" id="UPA00610">
    <property type="reaction ID" value="UER00666"/>
</dbReference>
<dbReference type="Proteomes" id="UP000000416">
    <property type="component" value="Chromosome"/>
</dbReference>
<dbReference type="GO" id="GO:0004170">
    <property type="term" value="F:dUTP diphosphatase activity"/>
    <property type="evidence" value="ECO:0007669"/>
    <property type="project" value="UniProtKB-UniRule"/>
</dbReference>
<dbReference type="GO" id="GO:0000287">
    <property type="term" value="F:magnesium ion binding"/>
    <property type="evidence" value="ECO:0007669"/>
    <property type="project" value="UniProtKB-UniRule"/>
</dbReference>
<dbReference type="GO" id="GO:0006226">
    <property type="term" value="P:dUMP biosynthetic process"/>
    <property type="evidence" value="ECO:0007669"/>
    <property type="project" value="UniProtKB-UniRule"/>
</dbReference>
<dbReference type="GO" id="GO:0046081">
    <property type="term" value="P:dUTP catabolic process"/>
    <property type="evidence" value="ECO:0007669"/>
    <property type="project" value="InterPro"/>
</dbReference>
<dbReference type="CDD" id="cd07557">
    <property type="entry name" value="trimeric_dUTPase"/>
    <property type="match status" value="1"/>
</dbReference>
<dbReference type="FunFam" id="2.70.40.10:FF:000002">
    <property type="entry name" value="dUTP diphosphatase"/>
    <property type="match status" value="1"/>
</dbReference>
<dbReference type="Gene3D" id="2.70.40.10">
    <property type="match status" value="1"/>
</dbReference>
<dbReference type="HAMAP" id="MF_00116">
    <property type="entry name" value="dUTPase_bact"/>
    <property type="match status" value="1"/>
</dbReference>
<dbReference type="InterPro" id="IPR008181">
    <property type="entry name" value="dUTPase"/>
</dbReference>
<dbReference type="InterPro" id="IPR029054">
    <property type="entry name" value="dUTPase-like"/>
</dbReference>
<dbReference type="InterPro" id="IPR036157">
    <property type="entry name" value="dUTPase-like_sf"/>
</dbReference>
<dbReference type="InterPro" id="IPR033704">
    <property type="entry name" value="dUTPase_trimeric"/>
</dbReference>
<dbReference type="NCBIfam" id="TIGR00576">
    <property type="entry name" value="dut"/>
    <property type="match status" value="1"/>
</dbReference>
<dbReference type="NCBIfam" id="NF001862">
    <property type="entry name" value="PRK00601.1"/>
    <property type="match status" value="1"/>
</dbReference>
<dbReference type="PANTHER" id="PTHR11241">
    <property type="entry name" value="DEOXYURIDINE 5'-TRIPHOSPHATE NUCLEOTIDOHYDROLASE"/>
    <property type="match status" value="1"/>
</dbReference>
<dbReference type="PANTHER" id="PTHR11241:SF0">
    <property type="entry name" value="DEOXYURIDINE 5'-TRIPHOSPHATE NUCLEOTIDOHYDROLASE"/>
    <property type="match status" value="1"/>
</dbReference>
<dbReference type="Pfam" id="PF00692">
    <property type="entry name" value="dUTPase"/>
    <property type="match status" value="1"/>
</dbReference>
<dbReference type="SUPFAM" id="SSF51283">
    <property type="entry name" value="dUTPase-like"/>
    <property type="match status" value="1"/>
</dbReference>
<accession>Q8K921</accession>
<keyword id="KW-0378">Hydrolase</keyword>
<keyword id="KW-0460">Magnesium</keyword>
<keyword id="KW-0479">Metal-binding</keyword>
<keyword id="KW-0546">Nucleotide metabolism</keyword>
<evidence type="ECO:0000255" key="1">
    <source>
        <dbReference type="HAMAP-Rule" id="MF_00116"/>
    </source>
</evidence>
<comment type="function">
    <text evidence="1">This enzyme is involved in nucleotide metabolism: it produces dUMP, the immediate precursor of thymidine nucleotides and it decreases the intracellular concentration of dUTP so that uracil cannot be incorporated into DNA.</text>
</comment>
<comment type="catalytic activity">
    <reaction evidence="1">
        <text>dUTP + H2O = dUMP + diphosphate + H(+)</text>
        <dbReference type="Rhea" id="RHEA:10248"/>
        <dbReference type="ChEBI" id="CHEBI:15377"/>
        <dbReference type="ChEBI" id="CHEBI:15378"/>
        <dbReference type="ChEBI" id="CHEBI:33019"/>
        <dbReference type="ChEBI" id="CHEBI:61555"/>
        <dbReference type="ChEBI" id="CHEBI:246422"/>
        <dbReference type="EC" id="3.6.1.23"/>
    </reaction>
</comment>
<comment type="cofactor">
    <cofactor evidence="1">
        <name>Mg(2+)</name>
        <dbReference type="ChEBI" id="CHEBI:18420"/>
    </cofactor>
</comment>
<comment type="pathway">
    <text evidence="1">Pyrimidine metabolism; dUMP biosynthesis; dUMP from dCTP (dUTP route): step 2/2.</text>
</comment>
<comment type="similarity">
    <text evidence="1">Belongs to the dUTPase family.</text>
</comment>
<sequence length="159" mass="17763">MQKHLINNNIKIRILDSNIKKNSSFFLPQYATPGSSGLDLRASIKKKISLPSKEVILVPTGIAIHIDNPYITALVLPRSGLGHKNGIILGNLIGLIDSDYQGELMISLWNRSKNIFFINPYDRIAQMIFVPIIRPTFSIVDDFEETVRFGKGFGHSGVQ</sequence>
<protein>
    <recommendedName>
        <fullName evidence="1">Deoxyuridine 5'-triphosphate nucleotidohydrolase</fullName>
        <shortName evidence="1">dUTPase</shortName>
        <ecNumber evidence="1">3.6.1.23</ecNumber>
    </recommendedName>
    <alternativeName>
        <fullName evidence="1">dUTP pyrophosphatase</fullName>
    </alternativeName>
</protein>
<proteinExistence type="inferred from homology"/>
<name>DUT_BUCAP</name>